<sequence length="562" mass="60230">MNINVANLLNGNYILLLFVVLALGLCLGKLRLGSIQLGNAIGVLVVSLLLGQQHFAINTEALNLGFMLFIFCVGVEAGPNFFSIFFRDGKNYLMLALVMVGSAMILALGLGKLFGWDIGLTAGMLAGSMTSTPVLVGAGDTLRHTMANGSSLQQAQDNLSLGYALTYLIGLVSLILGARYLPKLQHQDLPTSAQQIARERGLDTDSQRKVYLPVIRAYRVGPELVAWADGKNLRELGIYRQTGCYIERIRRNGILANPDGDAVLQVGDEISLVGYPDAHSRLDPSFRNGKEVFDRDLLDMRIVTEEIVVKNSNAVGKRLSHLKLTDHGCFLNRVIRSQIEMPIDDNVVLNKGDVLQVSGDARRVKSVAEKIGFISIHSQVTDLLAFCSFFILGLMIGLITFQFSNFSFGIGNAAGLLLAGIMLGFLRANHPTFGYIPQGALNMVKEFGLMVFMAGVGLSAGGGINSSLGAVGGQMLISGLIVSLVPVVICFVFGAYVLRMNRALLFGAIMGARTCAPAMDIISDTARSNIPALGYAGTYAIANVLLTLAGSLIVILWPGILG</sequence>
<comment type="subcellular location">
    <subcellularLocation>
        <location evidence="1">Cell membrane</location>
        <topology evidence="1">Multi-pass membrane protein</topology>
    </subcellularLocation>
</comment>
<comment type="similarity">
    <text evidence="1">Belongs to the AAE transporter (TC 2.A.81) family. YbjL subfamily.</text>
</comment>
<evidence type="ECO:0000255" key="1">
    <source>
        <dbReference type="HAMAP-Rule" id="MF_01015"/>
    </source>
</evidence>
<gene>
    <name type="ordered locus">YPDSF_2370</name>
</gene>
<organism>
    <name type="scientific">Yersinia pestis (strain Pestoides F)</name>
    <dbReference type="NCBI Taxonomy" id="386656"/>
    <lineage>
        <taxon>Bacteria</taxon>
        <taxon>Pseudomonadati</taxon>
        <taxon>Pseudomonadota</taxon>
        <taxon>Gammaproteobacteria</taxon>
        <taxon>Enterobacterales</taxon>
        <taxon>Yersiniaceae</taxon>
        <taxon>Yersinia</taxon>
    </lineage>
</organism>
<feature type="chain" id="PRO_0000329154" description="Putative transport protein YPDSF_2370">
    <location>
        <begin position="1"/>
        <end position="562"/>
    </location>
</feature>
<feature type="transmembrane region" description="Helical" evidence="1">
    <location>
        <begin position="8"/>
        <end position="28"/>
    </location>
</feature>
<feature type="transmembrane region" description="Helical" evidence="1">
    <location>
        <begin position="37"/>
        <end position="57"/>
    </location>
</feature>
<feature type="transmembrane region" description="Helical" evidence="1">
    <location>
        <begin position="66"/>
        <end position="86"/>
    </location>
</feature>
<feature type="transmembrane region" description="Helical" evidence="1">
    <location>
        <begin position="94"/>
        <end position="114"/>
    </location>
</feature>
<feature type="transmembrane region" description="Helical" evidence="1">
    <location>
        <begin position="118"/>
        <end position="138"/>
    </location>
</feature>
<feature type="transmembrane region" description="Helical" evidence="1">
    <location>
        <begin position="158"/>
        <end position="178"/>
    </location>
</feature>
<feature type="transmembrane region" description="Helical" evidence="1">
    <location>
        <begin position="383"/>
        <end position="403"/>
    </location>
</feature>
<feature type="transmembrane region" description="Helical" evidence="1">
    <location>
        <begin position="406"/>
        <end position="426"/>
    </location>
</feature>
<feature type="transmembrane region" description="Helical" evidence="1">
    <location>
        <begin position="447"/>
        <end position="467"/>
    </location>
</feature>
<feature type="transmembrane region" description="Helical" evidence="1">
    <location>
        <begin position="475"/>
        <end position="495"/>
    </location>
</feature>
<feature type="transmembrane region" description="Helical" evidence="1">
    <location>
        <begin position="541"/>
        <end position="561"/>
    </location>
</feature>
<feature type="domain" description="RCK C-terminal 1" evidence="1">
    <location>
        <begin position="202"/>
        <end position="288"/>
    </location>
</feature>
<feature type="domain" description="RCK C-terminal 2" evidence="1">
    <location>
        <begin position="290"/>
        <end position="373"/>
    </location>
</feature>
<dbReference type="EMBL" id="CP000668">
    <property type="protein sequence ID" value="ABP40745.1"/>
    <property type="molecule type" value="Genomic_DNA"/>
</dbReference>
<dbReference type="RefSeq" id="WP_002208766.1">
    <property type="nucleotide sequence ID" value="NZ_CP009715.1"/>
</dbReference>
<dbReference type="SMR" id="A4TN83"/>
<dbReference type="KEGG" id="ypp:YPDSF_2370"/>
<dbReference type="PATRIC" id="fig|386656.14.peg.3868"/>
<dbReference type="GO" id="GO:0005886">
    <property type="term" value="C:plasma membrane"/>
    <property type="evidence" value="ECO:0007669"/>
    <property type="project" value="UniProtKB-SubCell"/>
</dbReference>
<dbReference type="GO" id="GO:0008324">
    <property type="term" value="F:monoatomic cation transmembrane transporter activity"/>
    <property type="evidence" value="ECO:0007669"/>
    <property type="project" value="InterPro"/>
</dbReference>
<dbReference type="GO" id="GO:0006813">
    <property type="term" value="P:potassium ion transport"/>
    <property type="evidence" value="ECO:0007669"/>
    <property type="project" value="InterPro"/>
</dbReference>
<dbReference type="FunFam" id="3.30.70.1450:FF:000003">
    <property type="entry name" value="Putative transport protein YbjL"/>
    <property type="match status" value="1"/>
</dbReference>
<dbReference type="Gene3D" id="3.30.70.1450">
    <property type="entry name" value="Regulator of K+ conductance, C-terminal domain"/>
    <property type="match status" value="2"/>
</dbReference>
<dbReference type="HAMAP" id="MF_01015">
    <property type="entry name" value="YbjL"/>
    <property type="match status" value="1"/>
</dbReference>
<dbReference type="InterPro" id="IPR050144">
    <property type="entry name" value="AAE_transporter"/>
</dbReference>
<dbReference type="InterPro" id="IPR006037">
    <property type="entry name" value="RCK_C"/>
</dbReference>
<dbReference type="InterPro" id="IPR036721">
    <property type="entry name" value="RCK_C_sf"/>
</dbReference>
<dbReference type="InterPro" id="IPR023017">
    <property type="entry name" value="Transp_YbjL_put"/>
</dbReference>
<dbReference type="InterPro" id="IPR006512">
    <property type="entry name" value="YidE_YbjL"/>
</dbReference>
<dbReference type="NCBIfam" id="NF003440">
    <property type="entry name" value="PRK04972.1"/>
    <property type="match status" value="1"/>
</dbReference>
<dbReference type="NCBIfam" id="TIGR01625">
    <property type="entry name" value="YidE_YbjL_dupl"/>
    <property type="match status" value="2"/>
</dbReference>
<dbReference type="PANTHER" id="PTHR30445">
    <property type="entry name" value="K(+)_H(+) ANTIPORTER SUBUNIT KHTT"/>
    <property type="match status" value="1"/>
</dbReference>
<dbReference type="PANTHER" id="PTHR30445:SF10">
    <property type="entry name" value="TRANSPORT PROTEIN YBJL-RELATED"/>
    <property type="match status" value="1"/>
</dbReference>
<dbReference type="Pfam" id="PF06826">
    <property type="entry name" value="Asp-Al_Ex"/>
    <property type="match status" value="2"/>
</dbReference>
<dbReference type="Pfam" id="PF02080">
    <property type="entry name" value="TrkA_C"/>
    <property type="match status" value="2"/>
</dbReference>
<dbReference type="SUPFAM" id="SSF116726">
    <property type="entry name" value="TrkA C-terminal domain-like"/>
    <property type="match status" value="2"/>
</dbReference>
<dbReference type="PROSITE" id="PS51202">
    <property type="entry name" value="RCK_C"/>
    <property type="match status" value="2"/>
</dbReference>
<accession>A4TN83</accession>
<protein>
    <recommendedName>
        <fullName evidence="1">Putative transport protein YPDSF_2370</fullName>
    </recommendedName>
</protein>
<name>Y2370_YERPP</name>
<reference key="1">
    <citation type="submission" date="2007-02" db="EMBL/GenBank/DDBJ databases">
        <title>Complete sequence of chromosome of Yersinia pestis Pestoides F.</title>
        <authorList>
            <consortium name="US DOE Joint Genome Institute"/>
            <person name="Copeland A."/>
            <person name="Lucas S."/>
            <person name="Lapidus A."/>
            <person name="Barry K."/>
            <person name="Detter J.C."/>
            <person name="Glavina del Rio T."/>
            <person name="Hammon N."/>
            <person name="Israni S."/>
            <person name="Dalin E."/>
            <person name="Tice H."/>
            <person name="Pitluck S."/>
            <person name="Di Bartolo G."/>
            <person name="Chain P."/>
            <person name="Malfatti S."/>
            <person name="Shin M."/>
            <person name="Vergez L."/>
            <person name="Schmutz J."/>
            <person name="Larimer F."/>
            <person name="Land M."/>
            <person name="Hauser L."/>
            <person name="Worsham P."/>
            <person name="Chu M."/>
            <person name="Bearden S."/>
            <person name="Garcia E."/>
            <person name="Richardson P."/>
        </authorList>
    </citation>
    <scope>NUCLEOTIDE SEQUENCE [LARGE SCALE GENOMIC DNA]</scope>
    <source>
        <strain>Pestoides F</strain>
    </source>
</reference>
<proteinExistence type="inferred from homology"/>
<keyword id="KW-1003">Cell membrane</keyword>
<keyword id="KW-0472">Membrane</keyword>
<keyword id="KW-0677">Repeat</keyword>
<keyword id="KW-0812">Transmembrane</keyword>
<keyword id="KW-1133">Transmembrane helix</keyword>
<keyword id="KW-0813">Transport</keyword>